<evidence type="ECO:0000255" key="1">
    <source>
        <dbReference type="HAMAP-Rule" id="MF_01026"/>
    </source>
</evidence>
<name>LEUC2_SALTY</name>
<sequence>MSAKTLYEKLVESHTIRELDNEGHVLLYIDRSILNEYTSPQAFSGLRERGRTVRHPDTFLLNIDHVNPTRSQRDDLMTDPGGQLQVDYFRENAADFGITLFDVLDPRQGIEHVVAHEQGLVMPGMVIAAGDSHTTTYGAFGALGFGIGTSEIEHLLATQTLVYRKLKTMRVSVQGELPFACSAKDIVLELLERIGADGATGYAIEFVGEAISALSVEGRMTLCNMAVEAGARGAIIAPDKKVFDYIYGKPQMPVGELWQQALLEWSQLSSDADAVFDKTVAINCHDLEPKVTWGISPDQTGSITGRVPFPEQETNPLKRLALEKALHYMGLTAGMLLKDIRISHAFIGSCTNGRIEDLRAVAKVLEGRKIASHVRGIIVPGSTMVRRQAEEEGLAKIFIAAGFEWRQSGCSMCLAMNEDVLSPGDRCASGTNRNFPGRQGAGARTHLMSPAMVAAAAVAGHLVDVRSLLQAGE</sequence>
<accession>Q8ZRJ0</accession>
<proteinExistence type="inferred from homology"/>
<feature type="chain" id="PRO_0000076804" description="3-isopropylmalate dehydratase large subunit 2">
    <location>
        <begin position="1"/>
        <end position="473"/>
    </location>
</feature>
<feature type="binding site" evidence="1">
    <location>
        <position position="350"/>
    </location>
    <ligand>
        <name>[4Fe-4S] cluster</name>
        <dbReference type="ChEBI" id="CHEBI:49883"/>
    </ligand>
</feature>
<feature type="binding site" evidence="1">
    <location>
        <position position="410"/>
    </location>
    <ligand>
        <name>[4Fe-4S] cluster</name>
        <dbReference type="ChEBI" id="CHEBI:49883"/>
    </ligand>
</feature>
<feature type="binding site" evidence="1">
    <location>
        <position position="413"/>
    </location>
    <ligand>
        <name>[4Fe-4S] cluster</name>
        <dbReference type="ChEBI" id="CHEBI:49883"/>
    </ligand>
</feature>
<keyword id="KW-0004">4Fe-4S</keyword>
<keyword id="KW-0028">Amino-acid biosynthesis</keyword>
<keyword id="KW-0100">Branched-chain amino acid biosynthesis</keyword>
<keyword id="KW-0408">Iron</keyword>
<keyword id="KW-0411">Iron-sulfur</keyword>
<keyword id="KW-0432">Leucine biosynthesis</keyword>
<keyword id="KW-0456">Lyase</keyword>
<keyword id="KW-0479">Metal-binding</keyword>
<keyword id="KW-1185">Reference proteome</keyword>
<dbReference type="EC" id="4.2.1.33" evidence="1"/>
<dbReference type="EMBL" id="AE006468">
    <property type="protein sequence ID" value="AAL19283.1"/>
    <property type="molecule type" value="Genomic_DNA"/>
</dbReference>
<dbReference type="RefSeq" id="NP_459324.1">
    <property type="nucleotide sequence ID" value="NC_003197.2"/>
</dbReference>
<dbReference type="SMR" id="Q8ZRJ0"/>
<dbReference type="STRING" id="99287.STM0329"/>
<dbReference type="PaxDb" id="99287-STM0329"/>
<dbReference type="GeneID" id="1251848"/>
<dbReference type="KEGG" id="stm:STM0329"/>
<dbReference type="PATRIC" id="fig|99287.12.peg.349"/>
<dbReference type="HOGENOM" id="CLU_006714_3_4_6"/>
<dbReference type="OMA" id="GNPEGFI"/>
<dbReference type="PhylomeDB" id="Q8ZRJ0"/>
<dbReference type="BioCyc" id="SENT99287:STM0329-MONOMER"/>
<dbReference type="UniPathway" id="UPA00048">
    <property type="reaction ID" value="UER00071"/>
</dbReference>
<dbReference type="Proteomes" id="UP000001014">
    <property type="component" value="Chromosome"/>
</dbReference>
<dbReference type="GO" id="GO:0003861">
    <property type="term" value="F:3-isopropylmalate dehydratase activity"/>
    <property type="evidence" value="ECO:0007669"/>
    <property type="project" value="UniProtKB-UniRule"/>
</dbReference>
<dbReference type="GO" id="GO:0051539">
    <property type="term" value="F:4 iron, 4 sulfur cluster binding"/>
    <property type="evidence" value="ECO:0007669"/>
    <property type="project" value="UniProtKB-KW"/>
</dbReference>
<dbReference type="GO" id="GO:0046872">
    <property type="term" value="F:metal ion binding"/>
    <property type="evidence" value="ECO:0007669"/>
    <property type="project" value="UniProtKB-KW"/>
</dbReference>
<dbReference type="GO" id="GO:0009098">
    <property type="term" value="P:L-leucine biosynthetic process"/>
    <property type="evidence" value="ECO:0007669"/>
    <property type="project" value="UniProtKB-UniRule"/>
</dbReference>
<dbReference type="CDD" id="cd01583">
    <property type="entry name" value="IPMI"/>
    <property type="match status" value="1"/>
</dbReference>
<dbReference type="FunFam" id="3.30.499.10:FF:000007">
    <property type="entry name" value="3-isopropylmalate dehydratase large subunit"/>
    <property type="match status" value="1"/>
</dbReference>
<dbReference type="Gene3D" id="3.30.499.10">
    <property type="entry name" value="Aconitase, domain 3"/>
    <property type="match status" value="2"/>
</dbReference>
<dbReference type="HAMAP" id="MF_01026">
    <property type="entry name" value="LeuC_type1"/>
    <property type="match status" value="1"/>
</dbReference>
<dbReference type="InterPro" id="IPR004430">
    <property type="entry name" value="3-IsopropMal_deHydase_lsu"/>
</dbReference>
<dbReference type="InterPro" id="IPR015931">
    <property type="entry name" value="Acnase/IPM_dHydase_lsu_aba_1/3"/>
</dbReference>
<dbReference type="InterPro" id="IPR001030">
    <property type="entry name" value="Acoase/IPM_deHydtase_lsu_aba"/>
</dbReference>
<dbReference type="InterPro" id="IPR018136">
    <property type="entry name" value="Aconitase_4Fe-4S_BS"/>
</dbReference>
<dbReference type="InterPro" id="IPR036008">
    <property type="entry name" value="Aconitase_4Fe-4S_dom"/>
</dbReference>
<dbReference type="InterPro" id="IPR050067">
    <property type="entry name" value="IPM_dehydratase_rel_enz"/>
</dbReference>
<dbReference type="InterPro" id="IPR033941">
    <property type="entry name" value="IPMI_cat"/>
</dbReference>
<dbReference type="NCBIfam" id="TIGR00170">
    <property type="entry name" value="leuC"/>
    <property type="match status" value="1"/>
</dbReference>
<dbReference type="NCBIfam" id="NF004016">
    <property type="entry name" value="PRK05478.1"/>
    <property type="match status" value="1"/>
</dbReference>
<dbReference type="NCBIfam" id="NF009116">
    <property type="entry name" value="PRK12466.1"/>
    <property type="match status" value="1"/>
</dbReference>
<dbReference type="PANTHER" id="PTHR43822:SF9">
    <property type="entry name" value="3-ISOPROPYLMALATE DEHYDRATASE"/>
    <property type="match status" value="1"/>
</dbReference>
<dbReference type="PANTHER" id="PTHR43822">
    <property type="entry name" value="HOMOACONITASE, MITOCHONDRIAL-RELATED"/>
    <property type="match status" value="1"/>
</dbReference>
<dbReference type="Pfam" id="PF00330">
    <property type="entry name" value="Aconitase"/>
    <property type="match status" value="1"/>
</dbReference>
<dbReference type="PRINTS" id="PR00415">
    <property type="entry name" value="ACONITASE"/>
</dbReference>
<dbReference type="SUPFAM" id="SSF53732">
    <property type="entry name" value="Aconitase iron-sulfur domain"/>
    <property type="match status" value="1"/>
</dbReference>
<dbReference type="PROSITE" id="PS00450">
    <property type="entry name" value="ACONITASE_1"/>
    <property type="match status" value="1"/>
</dbReference>
<dbReference type="PROSITE" id="PS01244">
    <property type="entry name" value="ACONITASE_2"/>
    <property type="match status" value="1"/>
</dbReference>
<comment type="function">
    <text evidence="1">Catalyzes the isomerization between 2-isopropylmalate and 3-isopropylmalate, via the formation of 2-isopropylmaleate.</text>
</comment>
<comment type="catalytic activity">
    <reaction evidence="1">
        <text>(2R,3S)-3-isopropylmalate = (2S)-2-isopropylmalate</text>
        <dbReference type="Rhea" id="RHEA:32287"/>
        <dbReference type="ChEBI" id="CHEBI:1178"/>
        <dbReference type="ChEBI" id="CHEBI:35121"/>
        <dbReference type="EC" id="4.2.1.33"/>
    </reaction>
</comment>
<comment type="cofactor">
    <cofactor evidence="1">
        <name>[4Fe-4S] cluster</name>
        <dbReference type="ChEBI" id="CHEBI:49883"/>
    </cofactor>
    <text evidence="1">Binds 1 [4Fe-4S] cluster per subunit.</text>
</comment>
<comment type="pathway">
    <text evidence="1">Amino-acid biosynthesis; L-leucine biosynthesis; L-leucine from 3-methyl-2-oxobutanoate: step 2/4.</text>
</comment>
<comment type="subunit">
    <text evidence="1">Heterodimer of LeuC and LeuD.</text>
</comment>
<comment type="similarity">
    <text evidence="1">Belongs to the aconitase/IPM isomerase family. LeuC type 1 subfamily.</text>
</comment>
<organism>
    <name type="scientific">Salmonella typhimurium (strain LT2 / SGSC1412 / ATCC 700720)</name>
    <dbReference type="NCBI Taxonomy" id="99287"/>
    <lineage>
        <taxon>Bacteria</taxon>
        <taxon>Pseudomonadati</taxon>
        <taxon>Pseudomonadota</taxon>
        <taxon>Gammaproteobacteria</taxon>
        <taxon>Enterobacterales</taxon>
        <taxon>Enterobacteriaceae</taxon>
        <taxon>Salmonella</taxon>
    </lineage>
</organism>
<reference key="1">
    <citation type="journal article" date="2001" name="Nature">
        <title>Complete genome sequence of Salmonella enterica serovar Typhimurium LT2.</title>
        <authorList>
            <person name="McClelland M."/>
            <person name="Sanderson K.E."/>
            <person name="Spieth J."/>
            <person name="Clifton S.W."/>
            <person name="Latreille P."/>
            <person name="Courtney L."/>
            <person name="Porwollik S."/>
            <person name="Ali J."/>
            <person name="Dante M."/>
            <person name="Du F."/>
            <person name="Hou S."/>
            <person name="Layman D."/>
            <person name="Leonard S."/>
            <person name="Nguyen C."/>
            <person name="Scott K."/>
            <person name="Holmes A."/>
            <person name="Grewal N."/>
            <person name="Mulvaney E."/>
            <person name="Ryan E."/>
            <person name="Sun H."/>
            <person name="Florea L."/>
            <person name="Miller W."/>
            <person name="Stoneking T."/>
            <person name="Nhan M."/>
            <person name="Waterston R."/>
            <person name="Wilson R.K."/>
        </authorList>
    </citation>
    <scope>NUCLEOTIDE SEQUENCE [LARGE SCALE GENOMIC DNA]</scope>
    <source>
        <strain>LT2 / SGSC1412 / ATCC 700720</strain>
    </source>
</reference>
<protein>
    <recommendedName>
        <fullName evidence="1">3-isopropylmalate dehydratase large subunit 2</fullName>
        <ecNumber evidence="1">4.2.1.33</ecNumber>
    </recommendedName>
    <alternativeName>
        <fullName evidence="1">Alpha-IPM isomerase 2</fullName>
        <shortName evidence="1">IPMI 2</shortName>
    </alternativeName>
    <alternativeName>
        <fullName evidence="1">Isopropylmalate isomerase 2</fullName>
    </alternativeName>
</protein>
<gene>
    <name evidence="1" type="primary">leuC2</name>
    <name type="ordered locus">STM0329</name>
</gene>